<accession>Q09354</accession>
<keyword id="KW-1185">Reference proteome</keyword>
<feature type="chain" id="PRO_0000065462" description="Uncharacterized protein T15H9.4">
    <location>
        <begin position="1"/>
        <end position="431"/>
    </location>
</feature>
<dbReference type="EMBL" id="Z47356">
    <property type="protein sequence ID" value="CAA87417.1"/>
    <property type="molecule type" value="Genomic_DNA"/>
</dbReference>
<dbReference type="PIR" id="T24941">
    <property type="entry name" value="T24941"/>
</dbReference>
<dbReference type="RefSeq" id="NP_496069.1">
    <property type="nucleotide sequence ID" value="NM_063668.2"/>
</dbReference>
<dbReference type="BioGRID" id="53202">
    <property type="interactions" value="3"/>
</dbReference>
<dbReference type="FunCoup" id="Q09354">
    <property type="interactions" value="105"/>
</dbReference>
<dbReference type="IntAct" id="Q09354">
    <property type="interactions" value="3"/>
</dbReference>
<dbReference type="PaxDb" id="6239-T15H9.4"/>
<dbReference type="EnsemblMetazoa" id="T15H9.4.1">
    <property type="protein sequence ID" value="T15H9.4.1"/>
    <property type="gene ID" value="WBGene00011789"/>
</dbReference>
<dbReference type="GeneID" id="188540"/>
<dbReference type="KEGG" id="cel:CELE_T15H9.4"/>
<dbReference type="UCSC" id="T15H9.4">
    <property type="organism name" value="c. elegans"/>
</dbReference>
<dbReference type="AGR" id="WB:WBGene00011789"/>
<dbReference type="CTD" id="188540"/>
<dbReference type="WormBase" id="T15H9.4">
    <property type="protein sequence ID" value="CE01667"/>
    <property type="gene ID" value="WBGene00011789"/>
</dbReference>
<dbReference type="eggNOG" id="ENOG502TH8U">
    <property type="taxonomic scope" value="Eukaryota"/>
</dbReference>
<dbReference type="GeneTree" id="ENSGT00970000197693"/>
<dbReference type="HOGENOM" id="CLU_031000_0_0_1"/>
<dbReference type="InParanoid" id="Q09354"/>
<dbReference type="OMA" id="EIIACRQ"/>
<dbReference type="OrthoDB" id="5850155at2759"/>
<dbReference type="PRO" id="PR:Q09354"/>
<dbReference type="Proteomes" id="UP000001940">
    <property type="component" value="Chromosome II"/>
</dbReference>
<dbReference type="Bgee" id="WBGene00011789">
    <property type="expression patterns" value="Expressed in pharyngeal muscle cell (C elegans) and 2 other cell types or tissues"/>
</dbReference>
<dbReference type="GO" id="GO:0000785">
    <property type="term" value="C:chromatin"/>
    <property type="evidence" value="ECO:0000318"/>
    <property type="project" value="GO_Central"/>
</dbReference>
<dbReference type="InterPro" id="IPR040264">
    <property type="entry name" value="T15H9.4-like"/>
</dbReference>
<dbReference type="PANTHER" id="PTHR31327:SF11">
    <property type="entry name" value="PDZ DOMAIN-CONTAINING PROTEIN"/>
    <property type="match status" value="1"/>
</dbReference>
<dbReference type="PANTHER" id="PTHR31327">
    <property type="entry name" value="SPERM MEIOSIS PDZ DOMAIN CONTAINING PROTEINS-RELATED"/>
    <property type="match status" value="1"/>
</dbReference>
<reference key="1">
    <citation type="journal article" date="1998" name="Science">
        <title>Genome sequence of the nematode C. elegans: a platform for investigating biology.</title>
        <authorList>
            <consortium name="The C. elegans sequencing consortium"/>
        </authorList>
    </citation>
    <scope>NUCLEOTIDE SEQUENCE [LARGE SCALE GENOMIC DNA]</scope>
    <source>
        <strain>Bristol N2</strain>
    </source>
</reference>
<proteinExistence type="predicted"/>
<name>YRY4_CAEEL</name>
<sequence length="431" mass="47690">MQLKRKNSVFIDPRIQEVAGPCEPSDNGNNEEEDKIISIRATASSASITKESVPEAPPTHFIPVVVTVEPDAWEKFRDIIQVNRNIVIVKVGRWLMSSFMPGDQISLVNGTAIWNSDDLENQVRGPKKETKTEVTVIRVWNLKCLTDIQLDKLLVPPEEQLHYFSVKVYSSKGTIGLKLCLDKKRVLVELIRAKTPVNSALLVGDQILGINDELLTAKSKRALRKQVAEVMKKSIKKQGFAEIIACRQVIARSSPAPSLEAELSEKFANYAVGVEKGTRIEKKDSSETNSLPLHSDALEIALRELACLKQWIVESSTEVPPCDKGPTLMIDPPTAPGSAEGCPPPLVKAKSTTNAIERSVYFPLSTTAAVAILVSTPKKRSIFRQQDRNSAINFAEQPDHEKITSDIPEEDDLKKCEPMSGIAAYIKKKFN</sequence>
<gene>
    <name type="ORF">T15H9.4</name>
</gene>
<protein>
    <recommendedName>
        <fullName>Uncharacterized protein T15H9.4</fullName>
    </recommendedName>
</protein>
<organism>
    <name type="scientific">Caenorhabditis elegans</name>
    <dbReference type="NCBI Taxonomy" id="6239"/>
    <lineage>
        <taxon>Eukaryota</taxon>
        <taxon>Metazoa</taxon>
        <taxon>Ecdysozoa</taxon>
        <taxon>Nematoda</taxon>
        <taxon>Chromadorea</taxon>
        <taxon>Rhabditida</taxon>
        <taxon>Rhabditina</taxon>
        <taxon>Rhabditomorpha</taxon>
        <taxon>Rhabditoidea</taxon>
        <taxon>Rhabditidae</taxon>
        <taxon>Peloderinae</taxon>
        <taxon>Caenorhabditis</taxon>
    </lineage>
</organism>